<accession>Q8K4M9</accession>
<keyword id="KW-0002">3D-structure</keyword>
<keyword id="KW-0040">ANK repeat</keyword>
<keyword id="KW-0175">Coiled coil</keyword>
<keyword id="KW-0967">Endosome</keyword>
<keyword id="KW-0445">Lipid transport</keyword>
<keyword id="KW-0446">Lipid-binding</keyword>
<keyword id="KW-1185">Reference proteome</keyword>
<keyword id="KW-0677">Repeat</keyword>
<keyword id="KW-0813">Transport</keyword>
<sequence>MNTEAEQQLLHHARNGNAEEVRKLLEAMARAEVVADIDCKGRSKSNLGWTPLHLACYFGHKQVVQDLLKAGAKVNMLNDMGDTPLHRAAFTGRKELVMLLLEYNADTTVVNGSGQTAKEATHDKEIRQMLEAVERTQQRKLEELLLGAAREGRTAEVSALLSRPNPPDVNCSDQLGNTPLHCAAYRAHKQCVLKLLRSGADPSLKNKNDQKPLDLAHGTEMKHILVGNKVVHKALKRFEGPLWKSSRFFGWKLFWVVLEHGVLSWYRKQPDAVHNSYRQGCKHLTQAVCTVKPTDGCLFSVRCFDDTVHGFRVPKNSLQQSREKWLEAIEEHSAYSTHYCSQDQVTDDEEEDVASAMDLKESLARAQTCQQRLDREIYNFLKMIKECDVAKDMLPSFLQKADVLSEASRETCVALSDCLNLFTKQEGVRNFKLEQEQEKNKILSEALETLATEHHELERSLVEGSPPVSILSEDEFYDALSGSESEGSLTCLEAVTARAFEENEVPANSGKHRMSEGKDCGGGDALSNGIKKHRTSLPSPMFSRNDFSIWSILRKCIGMELSKITMPVIFNEPLSFLQRLTEYMEHTYLIHKASSFSDPVERMQCVAAFAVSAVASQWERTGKPFNPLLGETYELVRDDLGFRLISEQVSHHPPISAFHAEGLNNDFIFHGSIYPKLKFWGKSVEAEPKGTITLELLEHNEAYTWTNPTCCVHNIIVGKLWIEQYGNVEIINHKTGDKCVLNFKPCGLFGKELHKVEGYIQDKSKKKLCALYGKWTECLYSVDPATFDAYKKNDKKNTEEKKTSKQASTSEESDEMPVPDSESVFVIPGSALLWRIAPRPPNSAQMYNFTSFAMVLNEVDKEMETVIPKTDCRLRPDIRAMENGEIDQASEEKKRLEEKQRAARKNRSKSEEDWKTRWFHQGPNPYSGAQDWIYSGSYWDRNYFNLPDIY</sequence>
<evidence type="ECO:0000250" key="1"/>
<evidence type="ECO:0000250" key="2">
    <source>
        <dbReference type="UniProtKB" id="Q91XL9"/>
    </source>
</evidence>
<evidence type="ECO:0000250" key="3">
    <source>
        <dbReference type="UniProtKB" id="Q9BXW6"/>
    </source>
</evidence>
<evidence type="ECO:0000255" key="4"/>
<evidence type="ECO:0000255" key="5">
    <source>
        <dbReference type="PROSITE-ProRule" id="PRU00145"/>
    </source>
</evidence>
<evidence type="ECO:0000256" key="6">
    <source>
        <dbReference type="SAM" id="MobiDB-lite"/>
    </source>
</evidence>
<evidence type="ECO:0000269" key="7">
    <source>
    </source>
</evidence>
<evidence type="ECO:0000269" key="8">
    <source>
    </source>
</evidence>
<evidence type="ECO:0000305" key="9"/>
<evidence type="ECO:0000312" key="10">
    <source>
        <dbReference type="RGD" id="628888"/>
    </source>
</evidence>
<organism>
    <name type="scientific">Rattus norvegicus</name>
    <name type="common">Rat</name>
    <dbReference type="NCBI Taxonomy" id="10116"/>
    <lineage>
        <taxon>Eukaryota</taxon>
        <taxon>Metazoa</taxon>
        <taxon>Chordata</taxon>
        <taxon>Craniata</taxon>
        <taxon>Vertebrata</taxon>
        <taxon>Euteleostomi</taxon>
        <taxon>Mammalia</taxon>
        <taxon>Eutheria</taxon>
        <taxon>Euarchontoglires</taxon>
        <taxon>Glires</taxon>
        <taxon>Rodentia</taxon>
        <taxon>Myomorpha</taxon>
        <taxon>Muroidea</taxon>
        <taxon>Muridae</taxon>
        <taxon>Murinae</taxon>
        <taxon>Rattus</taxon>
    </lineage>
</organism>
<proteinExistence type="evidence at protein level"/>
<reference key="1">
    <citation type="journal article" date="2000" name="Endocrinology">
        <title>Androgen-regulated expression of a novel member of the aldo-keto reductase superfamily in regrowing rat prostate.</title>
        <authorList>
            <person name="Nishi N."/>
            <person name="Shoji H."/>
            <person name="Miyanaka H."/>
            <person name="Nakamura T."/>
        </authorList>
    </citation>
    <scope>NUCLEOTIDE SEQUENCE [MRNA]</scope>
    <scope>TISSUE SPECIFICITY</scope>
    <source>
        <tissue>Liver</tissue>
    </source>
</reference>
<reference key="2">
    <citation type="journal article" date="2005" name="Structure">
        <title>Structural basis of FFAT motif-mediated ER targeting.</title>
        <authorList>
            <person name="Kaiser S.E."/>
            <person name="Brickner J.H."/>
            <person name="Reilein A.R."/>
            <person name="Fenn T.D."/>
            <person name="Walter P."/>
            <person name="Brunger A.T."/>
        </authorList>
    </citation>
    <scope>X-RAY CRYSTALLOGRAPHY (1.9 ANGSTROMS) OF 472-481 IN COMPLEX WITH VAPA</scope>
    <scope>INTERACTION WITH VAPA</scope>
</reference>
<feature type="chain" id="PRO_0000228846" description="Oxysterol-binding protein-related protein 1">
    <location>
        <begin position="1"/>
        <end position="950"/>
    </location>
</feature>
<feature type="repeat" description="ANK 1">
    <location>
        <begin position="47"/>
        <end position="76"/>
    </location>
</feature>
<feature type="repeat" description="ANK 2">
    <location>
        <begin position="80"/>
        <end position="109"/>
    </location>
</feature>
<feature type="repeat" description="ANK 3">
    <location>
        <begin position="175"/>
        <end position="204"/>
    </location>
</feature>
<feature type="domain" description="PH" evidence="5">
    <location>
        <begin position="235"/>
        <end position="334"/>
    </location>
</feature>
<feature type="region of interest" description="Interaction with RAB7A" evidence="1">
    <location>
        <begin position="1"/>
        <end position="237"/>
    </location>
</feature>
<feature type="region of interest" description="Disordered" evidence="6">
    <location>
        <begin position="795"/>
        <end position="821"/>
    </location>
</feature>
<feature type="region of interest" description="Disordered" evidence="6">
    <location>
        <begin position="881"/>
        <end position="913"/>
    </location>
</feature>
<feature type="coiled-coil region" evidence="4">
    <location>
        <begin position="430"/>
        <end position="463"/>
    </location>
</feature>
<feature type="coiled-coil region" evidence="4">
    <location>
        <begin position="877"/>
        <end position="913"/>
    </location>
</feature>
<feature type="short sequence motif" description="FFAT" evidence="3">
    <location>
        <begin position="469"/>
        <end position="483"/>
    </location>
</feature>
<feature type="compositionally biased region" description="Basic and acidic residues" evidence="6">
    <location>
        <begin position="890"/>
        <end position="901"/>
    </location>
</feature>
<name>OSBL1_RAT</name>
<protein>
    <recommendedName>
        <fullName evidence="9">Oxysterol-binding protein-related protein 1</fullName>
        <shortName>ORP-1</shortName>
        <shortName>OSBP-related protein 1</shortName>
    </recommendedName>
</protein>
<dbReference type="EMBL" id="AB089316">
    <property type="protein sequence ID" value="BAC07227.1"/>
    <property type="molecule type" value="mRNA"/>
</dbReference>
<dbReference type="RefSeq" id="NP_742020.1">
    <property type="nucleotide sequence ID" value="NM_172023.1"/>
</dbReference>
<dbReference type="PDB" id="1Z9O">
    <property type="method" value="X-ray"/>
    <property type="resolution" value="1.90 A"/>
    <property type="chains" value="G/H/I/J/K/L=472-481"/>
</dbReference>
<dbReference type="PDBsum" id="1Z9O"/>
<dbReference type="SMR" id="Q8K4M9"/>
<dbReference type="DIP" id="DIP-48447N"/>
<dbReference type="ELM" id="Q8K4M9"/>
<dbReference type="FunCoup" id="Q8K4M9">
    <property type="interactions" value="1419"/>
</dbReference>
<dbReference type="IntAct" id="Q8K4M9">
    <property type="interactions" value="1"/>
</dbReference>
<dbReference type="STRING" id="10116.ENSRNOP00000072477"/>
<dbReference type="PhosphoSitePlus" id="Q8K4M9"/>
<dbReference type="PaxDb" id="10116-ENSRNOP00000065976"/>
<dbReference type="GeneID" id="259221"/>
<dbReference type="KEGG" id="rno:259221"/>
<dbReference type="AGR" id="RGD:628888"/>
<dbReference type="CTD" id="114876"/>
<dbReference type="RGD" id="628888">
    <property type="gene designation" value="Osbpl1a"/>
</dbReference>
<dbReference type="eggNOG" id="KOG2209">
    <property type="taxonomic scope" value="Eukaryota"/>
</dbReference>
<dbReference type="InParanoid" id="Q8K4M9"/>
<dbReference type="OrthoDB" id="416222at2759"/>
<dbReference type="PhylomeDB" id="Q8K4M9"/>
<dbReference type="Reactome" id="R-RNO-192105">
    <property type="pathway name" value="Synthesis of bile acids and bile salts"/>
</dbReference>
<dbReference type="Reactome" id="R-RNO-2132295">
    <property type="pathway name" value="MHC class II antigen presentation"/>
</dbReference>
<dbReference type="EvolutionaryTrace" id="Q8K4M9"/>
<dbReference type="PRO" id="PR:Q8K4M9"/>
<dbReference type="Proteomes" id="UP000002494">
    <property type="component" value="Unplaced"/>
</dbReference>
<dbReference type="GO" id="GO:0005829">
    <property type="term" value="C:cytosol"/>
    <property type="evidence" value="ECO:0000318"/>
    <property type="project" value="GO_Central"/>
</dbReference>
<dbReference type="GO" id="GO:0005768">
    <property type="term" value="C:endosome"/>
    <property type="evidence" value="ECO:0000266"/>
    <property type="project" value="RGD"/>
</dbReference>
<dbReference type="GO" id="GO:0005770">
    <property type="term" value="C:late endosome"/>
    <property type="evidence" value="ECO:0000250"/>
    <property type="project" value="UniProtKB"/>
</dbReference>
<dbReference type="GO" id="GO:0044232">
    <property type="term" value="C:organelle membrane contact site"/>
    <property type="evidence" value="ECO:0000266"/>
    <property type="project" value="RGD"/>
</dbReference>
<dbReference type="GO" id="GO:0097038">
    <property type="term" value="C:perinuclear endoplasmic reticulum"/>
    <property type="evidence" value="ECO:0000318"/>
    <property type="project" value="GO_Central"/>
</dbReference>
<dbReference type="GO" id="GO:0005886">
    <property type="term" value="C:plasma membrane"/>
    <property type="evidence" value="ECO:0000318"/>
    <property type="project" value="GO_Central"/>
</dbReference>
<dbReference type="GO" id="GO:0015485">
    <property type="term" value="F:cholesterol binding"/>
    <property type="evidence" value="ECO:0000266"/>
    <property type="project" value="RGD"/>
</dbReference>
<dbReference type="GO" id="GO:0006869">
    <property type="term" value="P:lipid transport"/>
    <property type="evidence" value="ECO:0007669"/>
    <property type="project" value="UniProtKB-KW"/>
</dbReference>
<dbReference type="CDD" id="cd13285">
    <property type="entry name" value="PH_ORP1"/>
    <property type="match status" value="1"/>
</dbReference>
<dbReference type="FunFam" id="1.25.40.20:FF:000094">
    <property type="entry name" value="Oxysterol-binding protein"/>
    <property type="match status" value="1"/>
</dbReference>
<dbReference type="FunFam" id="1.25.40.20:FF:000098">
    <property type="entry name" value="Oxysterol-binding protein"/>
    <property type="match status" value="1"/>
</dbReference>
<dbReference type="FunFam" id="2.30.29.30:FF:000231">
    <property type="entry name" value="Oxysterol-binding protein"/>
    <property type="match status" value="1"/>
</dbReference>
<dbReference type="FunFam" id="2.40.160.120:FF:000005">
    <property type="entry name" value="Oxysterol-binding protein"/>
    <property type="match status" value="1"/>
</dbReference>
<dbReference type="FunFam" id="3.30.70.3490:FF:000003">
    <property type="entry name" value="Oxysterol-binding protein"/>
    <property type="match status" value="1"/>
</dbReference>
<dbReference type="Gene3D" id="2.40.160.120">
    <property type="match status" value="1"/>
</dbReference>
<dbReference type="Gene3D" id="3.30.70.3490">
    <property type="match status" value="1"/>
</dbReference>
<dbReference type="Gene3D" id="1.25.40.20">
    <property type="entry name" value="Ankyrin repeat-containing domain"/>
    <property type="match status" value="2"/>
</dbReference>
<dbReference type="Gene3D" id="2.30.29.30">
    <property type="entry name" value="Pleckstrin-homology domain (PH domain)/Phosphotyrosine-binding domain (PTB)"/>
    <property type="match status" value="1"/>
</dbReference>
<dbReference type="InterPro" id="IPR002110">
    <property type="entry name" value="Ankyrin_rpt"/>
</dbReference>
<dbReference type="InterPro" id="IPR036770">
    <property type="entry name" value="Ankyrin_rpt-contain_sf"/>
</dbReference>
<dbReference type="InterPro" id="IPR037239">
    <property type="entry name" value="OSBP_sf"/>
</dbReference>
<dbReference type="InterPro" id="IPR000648">
    <property type="entry name" value="Oxysterol-bd"/>
</dbReference>
<dbReference type="InterPro" id="IPR018494">
    <property type="entry name" value="Oxysterol-bd_CS"/>
</dbReference>
<dbReference type="InterPro" id="IPR011993">
    <property type="entry name" value="PH-like_dom_sf"/>
</dbReference>
<dbReference type="InterPro" id="IPR001849">
    <property type="entry name" value="PH_domain"/>
</dbReference>
<dbReference type="PANTHER" id="PTHR10972">
    <property type="entry name" value="OXYSTEROL-BINDING PROTEIN-RELATED"/>
    <property type="match status" value="1"/>
</dbReference>
<dbReference type="PANTHER" id="PTHR10972:SF53">
    <property type="entry name" value="OXYSTEROL-BINDING PROTEIN-RELATED PROTEIN 1"/>
    <property type="match status" value="1"/>
</dbReference>
<dbReference type="Pfam" id="PF12796">
    <property type="entry name" value="Ank_2"/>
    <property type="match status" value="2"/>
</dbReference>
<dbReference type="Pfam" id="PF01237">
    <property type="entry name" value="Oxysterol_BP"/>
    <property type="match status" value="1"/>
</dbReference>
<dbReference type="PRINTS" id="PR01415">
    <property type="entry name" value="ANKYRIN"/>
</dbReference>
<dbReference type="SMART" id="SM00248">
    <property type="entry name" value="ANK"/>
    <property type="match status" value="3"/>
</dbReference>
<dbReference type="SMART" id="SM00233">
    <property type="entry name" value="PH"/>
    <property type="match status" value="1"/>
</dbReference>
<dbReference type="SUPFAM" id="SSF48403">
    <property type="entry name" value="Ankyrin repeat"/>
    <property type="match status" value="1"/>
</dbReference>
<dbReference type="SUPFAM" id="SSF144000">
    <property type="entry name" value="Oxysterol-binding protein-like"/>
    <property type="match status" value="1"/>
</dbReference>
<dbReference type="SUPFAM" id="SSF50729">
    <property type="entry name" value="PH domain-like"/>
    <property type="match status" value="1"/>
</dbReference>
<dbReference type="PROSITE" id="PS50297">
    <property type="entry name" value="ANK_REP_REGION"/>
    <property type="match status" value="1"/>
</dbReference>
<dbReference type="PROSITE" id="PS50088">
    <property type="entry name" value="ANK_REPEAT"/>
    <property type="match status" value="3"/>
</dbReference>
<dbReference type="PROSITE" id="PS01013">
    <property type="entry name" value="OSBP"/>
    <property type="match status" value="1"/>
</dbReference>
<dbReference type="PROSITE" id="PS50003">
    <property type="entry name" value="PH_DOMAIN"/>
    <property type="match status" value="1"/>
</dbReference>
<gene>
    <name evidence="10" type="primary">Osbpl1a</name>
    <name type="synonym">Orp1</name>
</gene>
<comment type="function">
    <text evidence="3">Binds phospholipids; exhibits strong binding to phosphatidic acid and weak binding to phosphatidylinositol 3-phosphate. Stabilizes GTP-bound RAB7A on late endosomes/lysosomes and alters functional properties of late endocytic compartments via its interaction with RAB7A. Binds 25-hydroxycholesterol and cholesterol.</text>
</comment>
<comment type="subunit">
    <text evidence="2 3 8">Interacts (via FFAT motif) with VAPA (PubMed:16004875). Interacts (via FFAT motif) with VAPB (By similarity). Interacts with the GTP-bound form of RAB7A (By similarity). Interacts with OAS1B (By similarity). Interacts (via FFAT motif) with MOSPD2 (via MSP domain) (By similarity).</text>
</comment>
<comment type="interaction">
    <interactant intactId="EBI-15554439">
        <id>Q8K4M9</id>
    </interactant>
    <interactant intactId="EBI-2909425">
        <id>Q9Z270</id>
        <label>Vapa</label>
    </interactant>
    <organismsDiffer>false</organismsDiffer>
    <experiments>6</experiments>
</comment>
<comment type="subcellular location">
    <subcellularLocation>
        <location evidence="3">Late endosome</location>
    </subcellularLocation>
    <text evidence="3">Colocalizes with RAB7A, RAB9A and LAMP1 in late endosomes.</text>
</comment>
<comment type="tissue specificity">
    <text evidence="7">Detected in prostate and liver.</text>
</comment>
<comment type="domain">
    <text evidence="3">The FFAT motif is required for interaction with MOSPD2, VAPA and VAPB.</text>
</comment>
<comment type="similarity">
    <text evidence="9">Belongs to the OSBP family.</text>
</comment>